<feature type="chain" id="PRO_1000135822" description="3-isopropylmalate dehydratase small subunit">
    <location>
        <begin position="1"/>
        <end position="203"/>
    </location>
</feature>
<organism>
    <name type="scientific">Phenylobacterium zucineum (strain HLK1)</name>
    <dbReference type="NCBI Taxonomy" id="450851"/>
    <lineage>
        <taxon>Bacteria</taxon>
        <taxon>Pseudomonadati</taxon>
        <taxon>Pseudomonadota</taxon>
        <taxon>Alphaproteobacteria</taxon>
        <taxon>Caulobacterales</taxon>
        <taxon>Caulobacteraceae</taxon>
        <taxon>Phenylobacterium</taxon>
    </lineage>
</organism>
<sequence>MEAFTRLDAKAAPLPLANIDTDQIIPKQFLKTVERAGLAKGLFYDLRFDEQGREKPNFVLNRPEYKGAGVLVAGDNFGCGSSREHAPWALMDFGIRCVISTSFADIFYGNCFQNGLLPVVLKAEEVQQLMDEARGGNHVVSVDLEAQTVTSPSGAVFRFEIDPQRKDKMLRGLDAIGETLQSQKDIDVYEMKRALAQPWLEGA</sequence>
<evidence type="ECO:0000255" key="1">
    <source>
        <dbReference type="HAMAP-Rule" id="MF_01031"/>
    </source>
</evidence>
<protein>
    <recommendedName>
        <fullName evidence="1">3-isopropylmalate dehydratase small subunit</fullName>
        <ecNumber evidence="1">4.2.1.33</ecNumber>
    </recommendedName>
    <alternativeName>
        <fullName evidence="1">Alpha-IPM isomerase</fullName>
        <shortName evidence="1">IPMI</shortName>
    </alternativeName>
    <alternativeName>
        <fullName evidence="1">Isopropylmalate isomerase</fullName>
    </alternativeName>
</protein>
<comment type="function">
    <text evidence="1">Catalyzes the isomerization between 2-isopropylmalate and 3-isopropylmalate, via the formation of 2-isopropylmaleate.</text>
</comment>
<comment type="catalytic activity">
    <reaction evidence="1">
        <text>(2R,3S)-3-isopropylmalate = (2S)-2-isopropylmalate</text>
        <dbReference type="Rhea" id="RHEA:32287"/>
        <dbReference type="ChEBI" id="CHEBI:1178"/>
        <dbReference type="ChEBI" id="CHEBI:35121"/>
        <dbReference type="EC" id="4.2.1.33"/>
    </reaction>
</comment>
<comment type="pathway">
    <text evidence="1">Amino-acid biosynthesis; L-leucine biosynthesis; L-leucine from 3-methyl-2-oxobutanoate: step 2/4.</text>
</comment>
<comment type="subunit">
    <text evidence="1">Heterodimer of LeuC and LeuD.</text>
</comment>
<comment type="similarity">
    <text evidence="1">Belongs to the LeuD family. LeuD type 1 subfamily.</text>
</comment>
<proteinExistence type="inferred from homology"/>
<name>LEUD_PHEZH</name>
<reference key="1">
    <citation type="journal article" date="2008" name="BMC Genomics">
        <title>Complete genome of Phenylobacterium zucineum - a novel facultative intracellular bacterium isolated from human erythroleukemia cell line K562.</title>
        <authorList>
            <person name="Luo Y."/>
            <person name="Xu X."/>
            <person name="Ding Z."/>
            <person name="Liu Z."/>
            <person name="Zhang B."/>
            <person name="Yan Z."/>
            <person name="Sun J."/>
            <person name="Hu S."/>
            <person name="Hu X."/>
        </authorList>
    </citation>
    <scope>NUCLEOTIDE SEQUENCE [LARGE SCALE GENOMIC DNA]</scope>
    <source>
        <strain>HLK1</strain>
    </source>
</reference>
<dbReference type="EC" id="4.2.1.33" evidence="1"/>
<dbReference type="EMBL" id="CP000747">
    <property type="protein sequence ID" value="ACG76519.1"/>
    <property type="molecule type" value="Genomic_DNA"/>
</dbReference>
<dbReference type="RefSeq" id="WP_012520667.1">
    <property type="nucleotide sequence ID" value="NC_011144.1"/>
</dbReference>
<dbReference type="SMR" id="B4RCC0"/>
<dbReference type="STRING" id="450851.PHZ_c0105"/>
<dbReference type="KEGG" id="pzu:PHZ_c0105"/>
<dbReference type="eggNOG" id="COG0066">
    <property type="taxonomic scope" value="Bacteria"/>
</dbReference>
<dbReference type="HOGENOM" id="CLU_081378_0_3_5"/>
<dbReference type="OrthoDB" id="9777465at2"/>
<dbReference type="UniPathway" id="UPA00048">
    <property type="reaction ID" value="UER00071"/>
</dbReference>
<dbReference type="Proteomes" id="UP000001868">
    <property type="component" value="Chromosome"/>
</dbReference>
<dbReference type="GO" id="GO:0009316">
    <property type="term" value="C:3-isopropylmalate dehydratase complex"/>
    <property type="evidence" value="ECO:0007669"/>
    <property type="project" value="InterPro"/>
</dbReference>
<dbReference type="GO" id="GO:0003861">
    <property type="term" value="F:3-isopropylmalate dehydratase activity"/>
    <property type="evidence" value="ECO:0007669"/>
    <property type="project" value="UniProtKB-UniRule"/>
</dbReference>
<dbReference type="GO" id="GO:0009098">
    <property type="term" value="P:L-leucine biosynthetic process"/>
    <property type="evidence" value="ECO:0007669"/>
    <property type="project" value="UniProtKB-UniRule"/>
</dbReference>
<dbReference type="CDD" id="cd01577">
    <property type="entry name" value="IPMI_Swivel"/>
    <property type="match status" value="1"/>
</dbReference>
<dbReference type="FunFam" id="3.20.19.10:FF:000003">
    <property type="entry name" value="3-isopropylmalate dehydratase small subunit"/>
    <property type="match status" value="1"/>
</dbReference>
<dbReference type="Gene3D" id="3.20.19.10">
    <property type="entry name" value="Aconitase, domain 4"/>
    <property type="match status" value="1"/>
</dbReference>
<dbReference type="HAMAP" id="MF_01031">
    <property type="entry name" value="LeuD_type1"/>
    <property type="match status" value="1"/>
</dbReference>
<dbReference type="InterPro" id="IPR004431">
    <property type="entry name" value="3-IsopropMal_deHydase_ssu"/>
</dbReference>
<dbReference type="InterPro" id="IPR015928">
    <property type="entry name" value="Aconitase/3IPM_dehydase_swvl"/>
</dbReference>
<dbReference type="InterPro" id="IPR000573">
    <property type="entry name" value="AconitaseA/IPMdHydase_ssu_swvl"/>
</dbReference>
<dbReference type="InterPro" id="IPR033940">
    <property type="entry name" value="IPMI_Swivel"/>
</dbReference>
<dbReference type="InterPro" id="IPR050075">
    <property type="entry name" value="LeuD"/>
</dbReference>
<dbReference type="NCBIfam" id="TIGR00171">
    <property type="entry name" value="leuD"/>
    <property type="match status" value="1"/>
</dbReference>
<dbReference type="NCBIfam" id="NF002458">
    <property type="entry name" value="PRK01641.1"/>
    <property type="match status" value="1"/>
</dbReference>
<dbReference type="PANTHER" id="PTHR43345:SF5">
    <property type="entry name" value="3-ISOPROPYLMALATE DEHYDRATASE SMALL SUBUNIT"/>
    <property type="match status" value="1"/>
</dbReference>
<dbReference type="PANTHER" id="PTHR43345">
    <property type="entry name" value="3-ISOPROPYLMALATE DEHYDRATASE SMALL SUBUNIT 2-RELATED-RELATED"/>
    <property type="match status" value="1"/>
</dbReference>
<dbReference type="Pfam" id="PF00694">
    <property type="entry name" value="Aconitase_C"/>
    <property type="match status" value="1"/>
</dbReference>
<dbReference type="SUPFAM" id="SSF52016">
    <property type="entry name" value="LeuD/IlvD-like"/>
    <property type="match status" value="1"/>
</dbReference>
<accession>B4RCC0</accession>
<gene>
    <name evidence="1" type="primary">leuD</name>
    <name type="ordered locus">PHZ_c0105</name>
</gene>
<keyword id="KW-0028">Amino-acid biosynthesis</keyword>
<keyword id="KW-0100">Branched-chain amino acid biosynthesis</keyword>
<keyword id="KW-0432">Leucine biosynthesis</keyword>
<keyword id="KW-0456">Lyase</keyword>
<keyword id="KW-1185">Reference proteome</keyword>